<keyword id="KW-0009">Actin-binding</keyword>
<keyword id="KW-0067">ATP-binding</keyword>
<keyword id="KW-1003">Cell membrane</keyword>
<keyword id="KW-0961">Cell wall biogenesis/degradation</keyword>
<keyword id="KW-0325">Glycoprotein</keyword>
<keyword id="KW-0328">Glycosyltransferase</keyword>
<keyword id="KW-0472">Membrane</keyword>
<keyword id="KW-0505">Motor protein</keyword>
<keyword id="KW-0518">Myosin</keyword>
<keyword id="KW-0547">Nucleotide-binding</keyword>
<keyword id="KW-0808">Transferase</keyword>
<keyword id="KW-0812">Transmembrane</keyword>
<keyword id="KW-1133">Transmembrane helix</keyword>
<comment type="function">
    <text evidence="8">Polymerizes chitin, a structural polymer of the cell wall and septum, by transferring the sugar moiety of UDP-GlcNAc to the non-reducing end of the growing chitin polymer (PubMed:16278457). Produces a large proportion of the chitin that is not deacetylated to chitosan (PubMed:16278457).</text>
</comment>
<comment type="catalytic activity">
    <reaction evidence="2">
        <text>[(1-&gt;4)-N-acetyl-beta-D-glucosaminyl](n) + UDP-N-acetyl-alpha-D-glucosamine = [(1-&gt;4)-N-acetyl-beta-D-glucosaminyl](n+1) + UDP + H(+)</text>
        <dbReference type="Rhea" id="RHEA:16637"/>
        <dbReference type="Rhea" id="RHEA-COMP:9593"/>
        <dbReference type="Rhea" id="RHEA-COMP:9595"/>
        <dbReference type="ChEBI" id="CHEBI:15378"/>
        <dbReference type="ChEBI" id="CHEBI:17029"/>
        <dbReference type="ChEBI" id="CHEBI:57705"/>
        <dbReference type="ChEBI" id="CHEBI:58223"/>
        <dbReference type="EC" id="2.4.1.16"/>
    </reaction>
</comment>
<comment type="subcellular location">
    <subcellularLocation>
        <location evidence="13">Cell membrane</location>
        <topology evidence="3">Multi-pass membrane protein</topology>
    </subcellularLocation>
    <subcellularLocation>
        <location evidence="1">Cell septum</location>
    </subcellularLocation>
    <subcellularLocation>
        <location evidence="1">Cell tip</location>
    </subcellularLocation>
</comment>
<comment type="induction">
    <text evidence="9 10">Induced by high temperature (PubMed:27611567). Repressed by the antifungal agent caspofungin (PubMed:31266771).</text>
</comment>
<comment type="domain">
    <text evidence="1">The N-terminal myosin motor-like domain (MMD) does not seem to have motor activity but is indispensable for polarized cell wall synthesis via binding to actin that ensures the proper localization to the hyphal tips and septation sites near actin structures.</text>
</comment>
<comment type="disruption phenotype">
    <text evidence="8 11">Decreases cellular chitin level (PubMed:16278457). Abnormal capsular morphology: lower fiber density, abnormal fiber distribution, decreases capsular diameter (PubMed:32743128). Increases extracellular vesicle secretion (PubMed:32743128). Sensitive to high temperature (PubMed:16278457).</text>
</comment>
<comment type="similarity">
    <text evidence="13">In the N-terminal section; belongs to the TRAFAC class CC myosin-kinesin ATPase superfamily. Myosin family.</text>
</comment>
<comment type="similarity">
    <text evidence="13">In the C-terminal section; belongs to the chitin synthase family. Class V subfamily.</text>
</comment>
<sequence length="1931" mass="218295">MAQQPPPSRFLGVTDLSSLAVTEDTVLVTLQERYISHKPYTSLSPAALVFLSPYSHLPIDDEESLLHYVEEYYQCNNEEGGSRNEQGWWKKKMEQPHVFQLALSAYYNMRRTGQDQVIIASGPTGSGKSELKRLAIEAITQVSLANPGKKGSKIGLQVSSAEFILKCFGNAHTLSNDEASRFGTYTELQFNERGRLEGLKTIVYYFERSRVSQAPINGERNFHAFYYLVSGAPEEERNFLKLGDVSDYRYLNCRVRRVGVDDRHRYSQLRQAFKLMGISSRLIAQIFQLLASILHIGNLRFSPSDGIQEGASVINVETLDIVAEFLGVHSESLAEIFSLKTVLVRKEVCTTFLGPEQAEQVRDELARTLYSLLFSWINEHINTKLCKDSFGSFIALVDLPGIQRNSGSMGSFNSVDQFCLNFAAEKMHNWVLHRVHETTRQEAETERLLISRVPYFDNSECLGMLSNPRGGLISVIDDLSQKKRSESNLLESLGKRFHNHPSMSISPQGNRSSASFTINHYDGPVTYSTSNFLERNANETSTDIIQLLRGDTTSRSQVSTTEGHGSSNPFIKGLFGMKNIAMQTHPRSDSTIVAAQQSVRPVRAPSTRRKKMMSLVPVSEEGGEETSDFQVGGGNDESYSSKELHCIAGQHWAAVDSLLKSFDQTQTWYIFALRPNDSQLPSQFDLRSMKQQVRSFGLVEMAQQLQTSWEVRLSHKEACERYNEELLYRGIPEGTGDVERLRDLKRLMSLNDADMGIGLQRVFLSHDLFRFLEDRLRAKEPGEQHAYEDLGHRKLQTDPFSPHRYQPTSFDSQDHVYKDPSIRPVDSSANLPLMEHAQPIVNSSLEIEDRESSAAPYVSYGGRSITDIEGYASSRDLLASSIHKSEKDPLDTEPQAGETTEVYRESIARRRWVWLCSILTWWIPGFLLSKIAGMKRQDIRQAWREKLAINMIIWFICGCAIFVIAILGPVICPTQHVYSTNELASHSYTLDPNNAFVAIRGEVFDLSQFAPTHLTAVSVVPTKSIMQYGGLDASELLPVQVSALCGGVSGSISQYVTLDSTNTTDVYSQYHDFRAFTNDSRPDWYAEMMIMMRHRFRVGFMGYTKKDLKKMAAQGKAVAIYDNLVYDMSNYIRQNGGGLKAPDGVNLTAQDQADRQFMSDQVVSLFKYNSGKDITTLLDNLGSTIGTDVVDRQKTCLRNLFILGKLDTRDSAQCQFSTYILLALSCVMVAVIGFKFLSALHFGSVRAPESHDKFVICQVPCYTEGEESLRRTIDSLCKLRYDDKRKLILVICDGNIKGFGNDKPTPAIVLDILGVDVNSDPEPLSFQSLGEGAKQHNMGKVYAGLYECAGHVVPYLVVAKVGKPNERQKPGNRGKRDSQMLVMHFLNKVHFSAPMNPLELEMYHQIKNVIGVNPSFYEYLFMVDADTTVDEMSLNRLVSAMRHDKKIIGVCGETSIANAKQSIVTMSQVYEYFISHHLSKAFESLFGSITCLPGCFSMYRLRSPDTNKPLFISHGIIQDYSENRVDTLHLKNLLHLGEDRYLTTLVLKHFQDYKTKFVRHAYAKTVAPDSIKVLLSQRRRWINSTVHNLAELVFLDQLCGFCCFSMRFVVFIDLLSTIIAPVTVAYIVYLIYLIVHDGSSIPTLSIIMLAAIYGLQAMIFIFRMRWDMIAWMIFYICAIPVFSFLLPLYSFWKMDDFSWGSTRLVVGDKGKKIVIHDEGKFDPSSIPLRSWEEYENELWDQESVHSGSYMPPKAEYSYDYPRTRSTYSHGGYAYGQPIHPMQTRSTSPVSSRYQMSQFRQSPYQSPYQGPYGGSTADFRSSRMDMAHRPSLDDTSSFHQPYQPAPRPQSSYAFNLPDPSSDSFTAPAVDYLGAQAITDSQLERSIRKICANAELDKLTKKGVRKELEREYGVELTERREAINRLVEKVLTE</sequence>
<organism>
    <name type="scientific">Cryptococcus neoformans var. grubii serotype A (strain H99 / ATCC 208821 / CBS 10515 / FGSC 9487)</name>
    <name type="common">Filobasidiella neoformans var. grubii</name>
    <dbReference type="NCBI Taxonomy" id="235443"/>
    <lineage>
        <taxon>Eukaryota</taxon>
        <taxon>Fungi</taxon>
        <taxon>Dikarya</taxon>
        <taxon>Basidiomycota</taxon>
        <taxon>Agaricomycotina</taxon>
        <taxon>Tremellomycetes</taxon>
        <taxon>Tremellales</taxon>
        <taxon>Cryptococcaceae</taxon>
        <taxon>Cryptococcus</taxon>
        <taxon>Cryptococcus neoformans species complex</taxon>
    </lineage>
</organism>
<gene>
    <name evidence="12" type="primary">CHS5</name>
    <name type="ORF">CNAG_05818</name>
</gene>
<accession>J9VNT4</accession>
<feature type="chain" id="PRO_0000451814" description="Chitin synthase 5">
    <location>
        <begin position="1"/>
        <end position="1931"/>
    </location>
</feature>
<feature type="transmembrane region" description="Helical" evidence="3">
    <location>
        <begin position="912"/>
        <end position="932"/>
    </location>
</feature>
<feature type="transmembrane region" description="Helical" evidence="3">
    <location>
        <begin position="951"/>
        <end position="971"/>
    </location>
</feature>
<feature type="transmembrane region" description="Helical" evidence="3">
    <location>
        <begin position="1220"/>
        <end position="1240"/>
    </location>
</feature>
<feature type="transmembrane region" description="Helical" evidence="3">
    <location>
        <begin position="1615"/>
        <end position="1635"/>
    </location>
</feature>
<feature type="transmembrane region" description="Helical" evidence="3">
    <location>
        <begin position="1641"/>
        <end position="1661"/>
    </location>
</feature>
<feature type="transmembrane region" description="Helical" evidence="3">
    <location>
        <begin position="1668"/>
        <end position="1688"/>
    </location>
</feature>
<feature type="domain" description="Myosin motor" evidence="5">
    <location>
        <begin position="11"/>
        <end position="777"/>
    </location>
</feature>
<feature type="domain" description="DEK-C" evidence="6">
    <location>
        <begin position="1875"/>
        <end position="1930"/>
    </location>
</feature>
<feature type="region of interest" description="Actin-binding" evidence="5">
    <location>
        <begin position="655"/>
        <end position="677"/>
    </location>
</feature>
<feature type="region of interest" description="Disordered" evidence="7">
    <location>
        <begin position="798"/>
        <end position="817"/>
    </location>
</feature>
<feature type="region of interest" description="Disordered" evidence="7">
    <location>
        <begin position="1826"/>
        <end position="1847"/>
    </location>
</feature>
<feature type="binding site" evidence="5">
    <location>
        <begin position="122"/>
        <end position="129"/>
    </location>
    <ligand>
        <name>ATP</name>
        <dbReference type="ChEBI" id="CHEBI:30616"/>
    </ligand>
</feature>
<feature type="glycosylation site" description="N-linked (GlcNAc...) asparagine" evidence="4">
    <location>
        <position position="510"/>
    </location>
</feature>
<feature type="glycosylation site" description="N-linked (GlcNAc...) asparagine" evidence="4">
    <location>
        <position position="538"/>
    </location>
</feature>
<feature type="glycosylation site" description="N-linked (GlcNAc...) asparagine" evidence="4">
    <location>
        <position position="676"/>
    </location>
</feature>
<feature type="glycosylation site" description="N-linked (GlcNAc...) asparagine" evidence="4">
    <location>
        <position position="842"/>
    </location>
</feature>
<feature type="glycosylation site" description="N-linked (GlcNAc...) asparagine" evidence="4">
    <location>
        <position position="1062"/>
    </location>
</feature>
<feature type="glycosylation site" description="N-linked (GlcNAc...) asparagine" evidence="4">
    <location>
        <position position="1078"/>
    </location>
</feature>
<feature type="glycosylation site" description="N-linked (GlcNAc...) asparagine" evidence="4">
    <location>
        <position position="1146"/>
    </location>
</feature>
<feature type="glycosylation site" description="N-linked (GlcNAc...) asparagine" evidence="4">
    <location>
        <position position="1583"/>
    </location>
</feature>
<name>CHS5_CRYNH</name>
<protein>
    <recommendedName>
        <fullName evidence="12">Chitin synthase 5</fullName>
        <ecNumber evidence="14">2.4.1.16</ecNumber>
    </recommendedName>
    <alternativeName>
        <fullName evidence="13">Chitin-UDP acetyl-glucosaminyl transferase 5</fullName>
    </alternativeName>
    <alternativeName>
        <fullName evidence="12">Class-V chitin synthase 5</fullName>
    </alternativeName>
</protein>
<reference key="1">
    <citation type="journal article" date="2014" name="PLoS Genet.">
        <title>Analysis of the genome and transcriptome of Cryptococcus neoformans var. grubii reveals complex RNA expression and microevolution leading to virulence attenuation.</title>
        <authorList>
            <person name="Janbon G."/>
            <person name="Ormerod K.L."/>
            <person name="Paulet D."/>
            <person name="Byrnes E.J. III"/>
            <person name="Yadav V."/>
            <person name="Chatterjee G."/>
            <person name="Mullapudi N."/>
            <person name="Hon C.-C."/>
            <person name="Billmyre R.B."/>
            <person name="Brunel F."/>
            <person name="Bahn Y.-S."/>
            <person name="Chen W."/>
            <person name="Chen Y."/>
            <person name="Chow E.W.L."/>
            <person name="Coppee J.-Y."/>
            <person name="Floyd-Averette A."/>
            <person name="Gaillardin C."/>
            <person name="Gerik K.J."/>
            <person name="Goldberg J."/>
            <person name="Gonzalez-Hilarion S."/>
            <person name="Gujja S."/>
            <person name="Hamlin J.L."/>
            <person name="Hsueh Y.-P."/>
            <person name="Ianiri G."/>
            <person name="Jones S."/>
            <person name="Kodira C.D."/>
            <person name="Kozubowski L."/>
            <person name="Lam W."/>
            <person name="Marra M."/>
            <person name="Mesner L.D."/>
            <person name="Mieczkowski P.A."/>
            <person name="Moyrand F."/>
            <person name="Nielsen K."/>
            <person name="Proux C."/>
            <person name="Rossignol T."/>
            <person name="Schein J.E."/>
            <person name="Sun S."/>
            <person name="Wollschlaeger C."/>
            <person name="Wood I.A."/>
            <person name="Zeng Q."/>
            <person name="Neuveglise C."/>
            <person name="Newlon C.S."/>
            <person name="Perfect J.R."/>
            <person name="Lodge J.K."/>
            <person name="Idnurm A."/>
            <person name="Stajich J.E."/>
            <person name="Kronstad J.W."/>
            <person name="Sanyal K."/>
            <person name="Heitman J."/>
            <person name="Fraser J.A."/>
            <person name="Cuomo C.A."/>
            <person name="Dietrich F.S."/>
        </authorList>
    </citation>
    <scope>NUCLEOTIDE SEQUENCE [LARGE SCALE GENOMIC DNA]</scope>
    <source>
        <strain>H99 / ATCC 208821 / CBS 10515 / FGSC 9487</strain>
    </source>
</reference>
<reference key="2">
    <citation type="journal article" date="2005" name="Eukaryot. Cell">
        <title>A chitin synthase and its regulator protein are critical for chitosan production and growth of the fungal pathogen Cryptococcus neoformans.</title>
        <authorList>
            <person name="Banks I.R."/>
            <person name="Specht C.A."/>
            <person name="Donlin M.J."/>
            <person name="Gerik K.J."/>
            <person name="Levitz S.M."/>
            <person name="Lodge J.K."/>
        </authorList>
    </citation>
    <scope>FUNCTION</scope>
    <scope>DISRUPTION PHENOTYPE</scope>
</reference>
<reference key="3">
    <citation type="journal article" date="2016" name="PLoS Pathog.">
        <title>Calcineurin Targets Involved in Stress Survival and Fungal Virulence.</title>
        <authorList>
            <person name="Park H.S."/>
            <person name="Chow E.W."/>
            <person name="Fu C."/>
            <person name="Soderblom E.J."/>
            <person name="Moseley M.A."/>
            <person name="Heitman J."/>
            <person name="Cardenas M.E."/>
        </authorList>
    </citation>
    <scope>INDUCTION</scope>
</reference>
<reference key="4">
    <citation type="journal article" date="2018" name="Cell Surf.">
        <title>Lack of chitin synthase genes impacts capsular architecture and cellular physiology in Cryptococcus neoformans.</title>
        <authorList>
            <person name="Rodrigues J."/>
            <person name="Ramos C.L."/>
            <person name="Frases S."/>
            <person name="Godinho R.M.D.C."/>
            <person name="Fonseca F.L."/>
            <person name="Rodrigues M.L."/>
        </authorList>
    </citation>
    <scope>DISRUPTION PHENOTYPE</scope>
</reference>
<reference key="5">
    <citation type="journal article" date="2019" name="Genetics">
        <title>Roles for Stress Response and Cell Wall Biosynthesis Pathways in Caspofungin Tolerance in Cryptococcus neoformans.</title>
        <authorList>
            <person name="Pianalto K.M."/>
            <person name="Billmyre R.B."/>
            <person name="Telzrow C.L."/>
            <person name="Alspaugh J.A."/>
        </authorList>
    </citation>
    <scope>INDUCTION</scope>
</reference>
<evidence type="ECO:0000250" key="1">
    <source>
        <dbReference type="UniProtKB" id="G5EB74"/>
    </source>
</evidence>
<evidence type="ECO:0000250" key="2">
    <source>
        <dbReference type="UniProtKB" id="P29465"/>
    </source>
</evidence>
<evidence type="ECO:0000255" key="3"/>
<evidence type="ECO:0000255" key="4">
    <source>
        <dbReference type="PROSITE-ProRule" id="PRU00498"/>
    </source>
</evidence>
<evidence type="ECO:0000255" key="5">
    <source>
        <dbReference type="PROSITE-ProRule" id="PRU00782"/>
    </source>
</evidence>
<evidence type="ECO:0000255" key="6">
    <source>
        <dbReference type="PROSITE-ProRule" id="PRU01342"/>
    </source>
</evidence>
<evidence type="ECO:0000256" key="7">
    <source>
        <dbReference type="SAM" id="MobiDB-lite"/>
    </source>
</evidence>
<evidence type="ECO:0000269" key="8">
    <source>
    </source>
</evidence>
<evidence type="ECO:0000269" key="9">
    <source>
    </source>
</evidence>
<evidence type="ECO:0000269" key="10">
    <source>
    </source>
</evidence>
<evidence type="ECO:0000269" key="11">
    <source>
    </source>
</evidence>
<evidence type="ECO:0000303" key="12">
    <source>
    </source>
</evidence>
<evidence type="ECO:0000305" key="13"/>
<evidence type="ECO:0000305" key="14">
    <source>
    </source>
</evidence>
<proteinExistence type="evidence at transcript level"/>
<dbReference type="EC" id="2.4.1.16" evidence="14"/>
<dbReference type="EMBL" id="CP003826">
    <property type="protein sequence ID" value="AFR96137.1"/>
    <property type="molecule type" value="Genomic_DNA"/>
</dbReference>
<dbReference type="RefSeq" id="XP_012050554.1">
    <property type="nucleotide sequence ID" value="XM_012195164.1"/>
</dbReference>
<dbReference type="SMR" id="J9VNT4"/>
<dbReference type="GlyCosmos" id="J9VNT4">
    <property type="glycosylation" value="8 sites, No reported glycans"/>
</dbReference>
<dbReference type="GeneID" id="23889107"/>
<dbReference type="KEGG" id="cng:CNAG_05818"/>
<dbReference type="VEuPathDB" id="FungiDB:CNAG_05818"/>
<dbReference type="HOGENOM" id="CLU_000192_0_2_1"/>
<dbReference type="OrthoDB" id="2416at5206"/>
<dbReference type="Proteomes" id="UP000010091">
    <property type="component" value="Chromosome 7"/>
</dbReference>
<dbReference type="GO" id="GO:0030428">
    <property type="term" value="C:cell septum"/>
    <property type="evidence" value="ECO:0007669"/>
    <property type="project" value="UniProtKB-SubCell"/>
</dbReference>
<dbReference type="GO" id="GO:0051286">
    <property type="term" value="C:cell tip"/>
    <property type="evidence" value="ECO:0007669"/>
    <property type="project" value="UniProtKB-SubCell"/>
</dbReference>
<dbReference type="GO" id="GO:0016459">
    <property type="term" value="C:myosin complex"/>
    <property type="evidence" value="ECO:0007669"/>
    <property type="project" value="UniProtKB-KW"/>
</dbReference>
<dbReference type="GO" id="GO:0005886">
    <property type="term" value="C:plasma membrane"/>
    <property type="evidence" value="ECO:0007669"/>
    <property type="project" value="UniProtKB-SubCell"/>
</dbReference>
<dbReference type="GO" id="GO:0003779">
    <property type="term" value="F:actin binding"/>
    <property type="evidence" value="ECO:0007669"/>
    <property type="project" value="UniProtKB-KW"/>
</dbReference>
<dbReference type="GO" id="GO:0005524">
    <property type="term" value="F:ATP binding"/>
    <property type="evidence" value="ECO:0007669"/>
    <property type="project" value="UniProtKB-KW"/>
</dbReference>
<dbReference type="GO" id="GO:0004100">
    <property type="term" value="F:chitin synthase activity"/>
    <property type="evidence" value="ECO:0000315"/>
    <property type="project" value="UniProtKB"/>
</dbReference>
<dbReference type="GO" id="GO:0003774">
    <property type="term" value="F:cytoskeletal motor activity"/>
    <property type="evidence" value="ECO:0007669"/>
    <property type="project" value="InterPro"/>
</dbReference>
<dbReference type="GO" id="GO:0006031">
    <property type="term" value="P:chitin biosynthetic process"/>
    <property type="evidence" value="ECO:0000315"/>
    <property type="project" value="UniProtKB"/>
</dbReference>
<dbReference type="GO" id="GO:0031505">
    <property type="term" value="P:fungal-type cell wall organization"/>
    <property type="evidence" value="ECO:0007669"/>
    <property type="project" value="TreeGrafter"/>
</dbReference>
<dbReference type="CDD" id="cd04190">
    <property type="entry name" value="Chitin_synth_C"/>
    <property type="match status" value="1"/>
</dbReference>
<dbReference type="CDD" id="cd14879">
    <property type="entry name" value="MYSc_Myo17"/>
    <property type="match status" value="1"/>
</dbReference>
<dbReference type="FunFam" id="3.40.850.10:FF:000155">
    <property type="entry name" value="Chitin synthase 8"/>
    <property type="match status" value="1"/>
</dbReference>
<dbReference type="Gene3D" id="1.10.10.820">
    <property type="match status" value="1"/>
</dbReference>
<dbReference type="Gene3D" id="1.20.58.530">
    <property type="match status" value="1"/>
</dbReference>
<dbReference type="Gene3D" id="3.10.120.10">
    <property type="entry name" value="Cytochrome b5-like heme/steroid binding domain"/>
    <property type="match status" value="1"/>
</dbReference>
<dbReference type="Gene3D" id="1.10.10.60">
    <property type="entry name" value="Homeodomain-like"/>
    <property type="match status" value="1"/>
</dbReference>
<dbReference type="Gene3D" id="3.40.850.10">
    <property type="entry name" value="Kinesin motor domain"/>
    <property type="match status" value="1"/>
</dbReference>
<dbReference type="Gene3D" id="1.20.120.720">
    <property type="entry name" value="Myosin VI head, motor domain, U50 subdomain"/>
    <property type="match status" value="1"/>
</dbReference>
<dbReference type="InterPro" id="IPR004835">
    <property type="entry name" value="Chitin_synth"/>
</dbReference>
<dbReference type="InterPro" id="IPR001199">
    <property type="entry name" value="Cyt_B5-like_heme/steroid-bd"/>
</dbReference>
<dbReference type="InterPro" id="IPR036400">
    <property type="entry name" value="Cyt_B5-like_heme/steroid_sf"/>
</dbReference>
<dbReference type="InterPro" id="IPR014876">
    <property type="entry name" value="DEK_C"/>
</dbReference>
<dbReference type="InterPro" id="IPR036961">
    <property type="entry name" value="Kinesin_motor_dom_sf"/>
</dbReference>
<dbReference type="InterPro" id="IPR001609">
    <property type="entry name" value="Myosin_head_motor_dom-like"/>
</dbReference>
<dbReference type="InterPro" id="IPR036037">
    <property type="entry name" value="MYSc_Myo17"/>
</dbReference>
<dbReference type="InterPro" id="IPR029044">
    <property type="entry name" value="Nucleotide-diphossugar_trans"/>
</dbReference>
<dbReference type="InterPro" id="IPR027417">
    <property type="entry name" value="P-loop_NTPase"/>
</dbReference>
<dbReference type="PANTHER" id="PTHR22914">
    <property type="entry name" value="CHITIN SYNTHASE"/>
    <property type="match status" value="1"/>
</dbReference>
<dbReference type="PANTHER" id="PTHR22914:SF45">
    <property type="entry name" value="CHITIN SYNTHASE"/>
    <property type="match status" value="1"/>
</dbReference>
<dbReference type="Pfam" id="PF03142">
    <property type="entry name" value="Chitin_synth_2"/>
    <property type="match status" value="1"/>
</dbReference>
<dbReference type="Pfam" id="PF00173">
    <property type="entry name" value="Cyt-b5"/>
    <property type="match status" value="1"/>
</dbReference>
<dbReference type="Pfam" id="PF08766">
    <property type="entry name" value="DEK_C"/>
    <property type="match status" value="1"/>
</dbReference>
<dbReference type="Pfam" id="PF00063">
    <property type="entry name" value="Myosin_head"/>
    <property type="match status" value="1"/>
</dbReference>
<dbReference type="PRINTS" id="PR00193">
    <property type="entry name" value="MYOSINHEAVY"/>
</dbReference>
<dbReference type="SMART" id="SM01117">
    <property type="entry name" value="Cyt-b5"/>
    <property type="match status" value="2"/>
</dbReference>
<dbReference type="SMART" id="SM00242">
    <property type="entry name" value="MYSc"/>
    <property type="match status" value="1"/>
</dbReference>
<dbReference type="SUPFAM" id="SSF55856">
    <property type="entry name" value="Cytochrome b5-like heme/steroid binding domain"/>
    <property type="match status" value="1"/>
</dbReference>
<dbReference type="SUPFAM" id="SSF109715">
    <property type="entry name" value="DEK C-terminal domain"/>
    <property type="match status" value="1"/>
</dbReference>
<dbReference type="SUPFAM" id="SSF53448">
    <property type="entry name" value="Nucleotide-diphospho-sugar transferases"/>
    <property type="match status" value="1"/>
</dbReference>
<dbReference type="SUPFAM" id="SSF52540">
    <property type="entry name" value="P-loop containing nucleoside triphosphate hydrolases"/>
    <property type="match status" value="1"/>
</dbReference>
<dbReference type="PROSITE" id="PS51998">
    <property type="entry name" value="DEK_C"/>
    <property type="match status" value="1"/>
</dbReference>
<dbReference type="PROSITE" id="PS51456">
    <property type="entry name" value="MYOSIN_MOTOR"/>
    <property type="match status" value="1"/>
</dbReference>